<dbReference type="EC" id="4.2.1.11" evidence="1 2"/>
<dbReference type="EMBL" id="CP000100">
    <property type="protein sequence ID" value="ABB56671.1"/>
    <property type="molecule type" value="Genomic_DNA"/>
</dbReference>
<dbReference type="RefSeq" id="WP_011243198.1">
    <property type="nucleotide sequence ID" value="NZ_JACJTX010000006.1"/>
</dbReference>
<dbReference type="PDB" id="4ROP">
    <property type="method" value="X-ray"/>
    <property type="resolution" value="2.05 A"/>
    <property type="chains" value="A=5-428"/>
</dbReference>
<dbReference type="PDB" id="5J04">
    <property type="method" value="X-ray"/>
    <property type="resolution" value="2.30 A"/>
    <property type="chains" value="A/B=5-428"/>
</dbReference>
<dbReference type="PDBsum" id="4ROP"/>
<dbReference type="PDBsum" id="5J04"/>
<dbReference type="SMR" id="Q31QJ8"/>
<dbReference type="STRING" id="1140.Synpcc7942_0639"/>
<dbReference type="PaxDb" id="1140-Synpcc7942_0639"/>
<dbReference type="GeneID" id="72429472"/>
<dbReference type="KEGG" id="syf:Synpcc7942_0639"/>
<dbReference type="eggNOG" id="COG0148">
    <property type="taxonomic scope" value="Bacteria"/>
</dbReference>
<dbReference type="HOGENOM" id="CLU_031223_2_1_3"/>
<dbReference type="OrthoDB" id="9804716at2"/>
<dbReference type="BioCyc" id="MetaCyc:SYNPCC7942_0639-MONOMER"/>
<dbReference type="BioCyc" id="SYNEL:SYNPCC7942_0639-MONOMER"/>
<dbReference type="UniPathway" id="UPA00109">
    <property type="reaction ID" value="UER00187"/>
</dbReference>
<dbReference type="Proteomes" id="UP000889800">
    <property type="component" value="Chromosome"/>
</dbReference>
<dbReference type="GO" id="GO:0009986">
    <property type="term" value="C:cell surface"/>
    <property type="evidence" value="ECO:0007669"/>
    <property type="project" value="UniProtKB-SubCell"/>
</dbReference>
<dbReference type="GO" id="GO:0005576">
    <property type="term" value="C:extracellular region"/>
    <property type="evidence" value="ECO:0007669"/>
    <property type="project" value="UniProtKB-SubCell"/>
</dbReference>
<dbReference type="GO" id="GO:0000015">
    <property type="term" value="C:phosphopyruvate hydratase complex"/>
    <property type="evidence" value="ECO:0007669"/>
    <property type="project" value="InterPro"/>
</dbReference>
<dbReference type="GO" id="GO:0000287">
    <property type="term" value="F:magnesium ion binding"/>
    <property type="evidence" value="ECO:0007669"/>
    <property type="project" value="UniProtKB-UniRule"/>
</dbReference>
<dbReference type="GO" id="GO:0004634">
    <property type="term" value="F:phosphopyruvate hydratase activity"/>
    <property type="evidence" value="ECO:0007669"/>
    <property type="project" value="UniProtKB-UniRule"/>
</dbReference>
<dbReference type="GO" id="GO:0006096">
    <property type="term" value="P:glycolytic process"/>
    <property type="evidence" value="ECO:0007669"/>
    <property type="project" value="UniProtKB-UniRule"/>
</dbReference>
<dbReference type="CDD" id="cd03313">
    <property type="entry name" value="enolase"/>
    <property type="match status" value="1"/>
</dbReference>
<dbReference type="FunFam" id="3.20.20.120:FF:000001">
    <property type="entry name" value="Enolase"/>
    <property type="match status" value="1"/>
</dbReference>
<dbReference type="FunFam" id="3.30.390.10:FF:000001">
    <property type="entry name" value="Enolase"/>
    <property type="match status" value="1"/>
</dbReference>
<dbReference type="Gene3D" id="3.20.20.120">
    <property type="entry name" value="Enolase-like C-terminal domain"/>
    <property type="match status" value="1"/>
</dbReference>
<dbReference type="Gene3D" id="3.30.390.10">
    <property type="entry name" value="Enolase-like, N-terminal domain"/>
    <property type="match status" value="1"/>
</dbReference>
<dbReference type="HAMAP" id="MF_00318">
    <property type="entry name" value="Enolase"/>
    <property type="match status" value="1"/>
</dbReference>
<dbReference type="InterPro" id="IPR000941">
    <property type="entry name" value="Enolase"/>
</dbReference>
<dbReference type="InterPro" id="IPR036849">
    <property type="entry name" value="Enolase-like_C_sf"/>
</dbReference>
<dbReference type="InterPro" id="IPR029017">
    <property type="entry name" value="Enolase-like_N"/>
</dbReference>
<dbReference type="InterPro" id="IPR020810">
    <property type="entry name" value="Enolase_C"/>
</dbReference>
<dbReference type="InterPro" id="IPR020809">
    <property type="entry name" value="Enolase_CS"/>
</dbReference>
<dbReference type="InterPro" id="IPR020811">
    <property type="entry name" value="Enolase_N"/>
</dbReference>
<dbReference type="NCBIfam" id="TIGR01060">
    <property type="entry name" value="eno"/>
    <property type="match status" value="1"/>
</dbReference>
<dbReference type="PANTHER" id="PTHR11902">
    <property type="entry name" value="ENOLASE"/>
    <property type="match status" value="1"/>
</dbReference>
<dbReference type="PANTHER" id="PTHR11902:SF1">
    <property type="entry name" value="ENOLASE"/>
    <property type="match status" value="1"/>
</dbReference>
<dbReference type="Pfam" id="PF00113">
    <property type="entry name" value="Enolase_C"/>
    <property type="match status" value="1"/>
</dbReference>
<dbReference type="Pfam" id="PF03952">
    <property type="entry name" value="Enolase_N"/>
    <property type="match status" value="1"/>
</dbReference>
<dbReference type="PIRSF" id="PIRSF001400">
    <property type="entry name" value="Enolase"/>
    <property type="match status" value="1"/>
</dbReference>
<dbReference type="PRINTS" id="PR00148">
    <property type="entry name" value="ENOLASE"/>
</dbReference>
<dbReference type="SFLD" id="SFLDF00002">
    <property type="entry name" value="enolase"/>
    <property type="match status" value="1"/>
</dbReference>
<dbReference type="SFLD" id="SFLDG00178">
    <property type="entry name" value="enolase"/>
    <property type="match status" value="1"/>
</dbReference>
<dbReference type="SMART" id="SM01192">
    <property type="entry name" value="Enolase_C"/>
    <property type="match status" value="1"/>
</dbReference>
<dbReference type="SMART" id="SM01193">
    <property type="entry name" value="Enolase_N"/>
    <property type="match status" value="1"/>
</dbReference>
<dbReference type="SUPFAM" id="SSF51604">
    <property type="entry name" value="Enolase C-terminal domain-like"/>
    <property type="match status" value="1"/>
</dbReference>
<dbReference type="SUPFAM" id="SSF54826">
    <property type="entry name" value="Enolase N-terminal domain-like"/>
    <property type="match status" value="1"/>
</dbReference>
<dbReference type="PROSITE" id="PS00164">
    <property type="entry name" value="ENOLASE"/>
    <property type="match status" value="1"/>
</dbReference>
<gene>
    <name evidence="1" type="primary">eno</name>
    <name type="ordered locus">Synpcc7942_0639</name>
</gene>
<proteinExistence type="evidence at protein level"/>
<accession>Q31QJ8</accession>
<sequence>MPDDYGTQIAEITAREILDSRGRPTVEAEVHLEDGSVGLAQVPSGASTGTFEAHELRDDDPSRYGGKGVQKAVENVSAIEDALIGLSALDQEGLDKAMIALDGTPNKKNLGANAILAVSLATAHAAATSLNLPLYRYLGGPLANVLPVPMMNVINGGAHADNNVDFQEFMIMPVGAPSFKEALRWGAEVFHALAKVLKDKGLATGVGDEGGFAPNLGSNKEALELLLTAIEAAGYKPGEQVALAMDVASSEFYKNGLYTCDGVSHEPAGMIGILADLVSQYPIVSIEDGLQEDDWSNWKTLTQQLGSTVQLVGDDLFVTNPDRLQSGIEQGVGNAVLIKLNQIGTLTETLRTIDLATRSGYRSVISHRSGETEDTTIADLAVATRAGQIKTGSLSRSERIAKYNRLLRIEAALGENALYAGAIGLGPKGR</sequence>
<name>ENO_SYNE7</name>
<organism>
    <name type="scientific">Synechococcus elongatus (strain ATCC 33912 / PCC 7942 / FACHB-805)</name>
    <name type="common">Anacystis nidulans R2</name>
    <dbReference type="NCBI Taxonomy" id="1140"/>
    <lineage>
        <taxon>Bacteria</taxon>
        <taxon>Bacillati</taxon>
        <taxon>Cyanobacteriota</taxon>
        <taxon>Cyanophyceae</taxon>
        <taxon>Synechococcales</taxon>
        <taxon>Synechococcaceae</taxon>
        <taxon>Synechococcus</taxon>
    </lineage>
</organism>
<evidence type="ECO:0000255" key="1">
    <source>
        <dbReference type="HAMAP-Rule" id="MF_00318"/>
    </source>
</evidence>
<evidence type="ECO:0000269" key="2">
    <source>
    </source>
</evidence>
<evidence type="ECO:0000305" key="3">
    <source>
    </source>
</evidence>
<evidence type="ECO:0007744" key="4">
    <source>
        <dbReference type="PDB" id="4ROP"/>
    </source>
</evidence>
<evidence type="ECO:0007744" key="5">
    <source>
        <dbReference type="PDB" id="5J04"/>
    </source>
</evidence>
<evidence type="ECO:0007829" key="6">
    <source>
        <dbReference type="PDB" id="4ROP"/>
    </source>
</evidence>
<keyword id="KW-0002">3D-structure</keyword>
<keyword id="KW-0963">Cytoplasm</keyword>
<keyword id="KW-0324">Glycolysis</keyword>
<keyword id="KW-0456">Lyase</keyword>
<keyword id="KW-0460">Magnesium</keyword>
<keyword id="KW-0479">Metal-binding</keyword>
<keyword id="KW-1185">Reference proteome</keyword>
<keyword id="KW-0964">Secreted</keyword>
<comment type="function">
    <text evidence="1 2">Catalyzes the reversible conversion of 2-phosphoglycerate (2-PG) into phosphoenolpyruvate (PEP) (PubMed:35400670). It is essential for the degradation of carbohydrates via glycolysis.</text>
</comment>
<comment type="catalytic activity">
    <reaction evidence="1 2">
        <text>(2R)-2-phosphoglycerate = phosphoenolpyruvate + H2O</text>
        <dbReference type="Rhea" id="RHEA:10164"/>
        <dbReference type="ChEBI" id="CHEBI:15377"/>
        <dbReference type="ChEBI" id="CHEBI:58289"/>
        <dbReference type="ChEBI" id="CHEBI:58702"/>
        <dbReference type="EC" id="4.2.1.11"/>
    </reaction>
    <physiologicalReaction direction="left-to-right" evidence="2">
        <dbReference type="Rhea" id="RHEA:10165"/>
    </physiologicalReaction>
</comment>
<comment type="cofactor">
    <cofactor evidence="1 3">
        <name>Mg(2+)</name>
        <dbReference type="ChEBI" id="CHEBI:18420"/>
    </cofactor>
    <text evidence="1 3">Binds a second Mg(2+) ion via substrate during catalysis (PubMed:35400670).</text>
</comment>
<comment type="biophysicochemical properties">
    <kinetics>
        <KM evidence="2">61 uM for 2-phosphoglycerate</KM>
        <text evidence="2">kcat is 7.4 sec(-1).</text>
    </kinetics>
</comment>
<comment type="pathway">
    <text evidence="1">Carbohydrate degradation; glycolysis; pyruvate from D-glyceraldehyde 3-phosphate: step 4/5.</text>
</comment>
<comment type="subunit">
    <text evidence="2">Crystals are solved as a homooctamer, a tetramer of homodimers; in solution is primarily monomeric (PubMed:35400670).</text>
</comment>
<comment type="subcellular location">
    <subcellularLocation>
        <location evidence="1">Cytoplasm</location>
    </subcellularLocation>
    <subcellularLocation>
        <location evidence="1">Secreted</location>
    </subcellularLocation>
    <subcellularLocation>
        <location evidence="1">Cell surface</location>
    </subcellularLocation>
    <text evidence="1">Fractions of enolase are present in both the cytoplasm and on the cell surface.</text>
</comment>
<comment type="similarity">
    <text evidence="1">Belongs to the enolase family.</text>
</comment>
<reference key="1">
    <citation type="submission" date="2005-08" db="EMBL/GenBank/DDBJ databases">
        <title>Complete sequence of chromosome 1 of Synechococcus elongatus PCC 7942.</title>
        <authorList>
            <consortium name="US DOE Joint Genome Institute"/>
            <person name="Copeland A."/>
            <person name="Lucas S."/>
            <person name="Lapidus A."/>
            <person name="Barry K."/>
            <person name="Detter J.C."/>
            <person name="Glavina T."/>
            <person name="Hammon N."/>
            <person name="Israni S."/>
            <person name="Pitluck S."/>
            <person name="Schmutz J."/>
            <person name="Larimer F."/>
            <person name="Land M."/>
            <person name="Kyrpides N."/>
            <person name="Lykidis A."/>
            <person name="Golden S."/>
            <person name="Richardson P."/>
        </authorList>
    </citation>
    <scope>NUCLEOTIDE SEQUENCE [LARGE SCALE GENOMIC DNA]</scope>
    <source>
        <strain>ATCC 33912 / PCC 7942 / FACHB-805</strain>
    </source>
</reference>
<reference evidence="4 5" key="2">
    <citation type="journal article" date="2022" name="Acta Crystallogr. F Struct. Biol. Commun.">
        <title>The structure of Synechococcus elongatus enolase reveals key aspects of phosphoenolpyruvate binding.</title>
        <authorList>
            <person name="Gonzalez J.M."/>
            <person name="Marti-Arbona R."/>
            <person name="Chen J.C.H."/>
            <person name="Unkefer C.J."/>
        </authorList>
    </citation>
    <scope>X-RAY CRYSTALLOGRAPHY (2.05 ANGSTROMS) OF 5-428 IN COMPLEX WITH CA(2+) AND PHOSPHOENOLPYRUVATE</scope>
    <scope>FUNCTION</scope>
    <scope>CATALYTIC ACTIVITY</scope>
    <scope>COFACTOR</scope>
    <scope>BIOPHYSICOCHEMICAL PROPERTIES</scope>
    <scope>SUBUNIT</scope>
    <source>
        <strain>ATCC 33912 / PCC 7942 / FACHB-805</strain>
    </source>
</reference>
<feature type="chain" id="PRO_0000267126" description="Enolase">
    <location>
        <begin position="1"/>
        <end position="430"/>
    </location>
</feature>
<feature type="active site" description="Proton donor" evidence="1">
    <location>
        <position position="209"/>
    </location>
</feature>
<feature type="active site" description="Proton acceptor" evidence="1">
    <location>
        <position position="339"/>
    </location>
</feature>
<feature type="binding site" evidence="3 5">
    <location>
        <position position="46"/>
    </location>
    <ligand>
        <name>Mg(2+)</name>
        <dbReference type="ChEBI" id="CHEBI:18420"/>
        <label>2</label>
    </ligand>
</feature>
<feature type="binding site" evidence="1">
    <location>
        <position position="167"/>
    </location>
    <ligand>
        <name>(2R)-2-phosphoglycerate</name>
        <dbReference type="ChEBI" id="CHEBI:58289"/>
    </ligand>
</feature>
<feature type="binding site" evidence="1 3 4 5">
    <location>
        <position position="246"/>
    </location>
    <ligand>
        <name>Mg(2+)</name>
        <dbReference type="ChEBI" id="CHEBI:18420"/>
        <label>1</label>
    </ligand>
</feature>
<feature type="binding site" evidence="1 3 4 5">
    <location>
        <position position="287"/>
    </location>
    <ligand>
        <name>Mg(2+)</name>
        <dbReference type="ChEBI" id="CHEBI:18420"/>
        <label>1</label>
    </ligand>
</feature>
<feature type="binding site" evidence="1 3 4 5">
    <location>
        <position position="314"/>
    </location>
    <ligand>
        <name>Mg(2+)</name>
        <dbReference type="ChEBI" id="CHEBI:18420"/>
        <label>1</label>
    </ligand>
</feature>
<feature type="binding site" evidence="1">
    <location>
        <position position="339"/>
    </location>
    <ligand>
        <name>(2R)-2-phosphoglycerate</name>
        <dbReference type="ChEBI" id="CHEBI:58289"/>
    </ligand>
</feature>
<feature type="binding site" evidence="2 5">
    <location>
        <position position="339"/>
    </location>
    <ligand>
        <name>phosphoenolpyruvate</name>
        <dbReference type="ChEBI" id="CHEBI:58702"/>
    </ligand>
</feature>
<feature type="binding site" evidence="1">
    <location>
        <position position="368"/>
    </location>
    <ligand>
        <name>(2R)-2-phosphoglycerate</name>
        <dbReference type="ChEBI" id="CHEBI:58289"/>
    </ligand>
</feature>
<feature type="binding site" evidence="2 5">
    <location>
        <position position="368"/>
    </location>
    <ligand>
        <name>phosphoenolpyruvate</name>
        <dbReference type="ChEBI" id="CHEBI:58702"/>
    </ligand>
</feature>
<feature type="binding site" evidence="1">
    <location>
        <position position="369"/>
    </location>
    <ligand>
        <name>(2R)-2-phosphoglycerate</name>
        <dbReference type="ChEBI" id="CHEBI:58289"/>
    </ligand>
</feature>
<feature type="binding site" evidence="2 5">
    <location>
        <position position="369"/>
    </location>
    <ligand>
        <name>phosphoenolpyruvate</name>
        <dbReference type="ChEBI" id="CHEBI:58702"/>
    </ligand>
</feature>
<feature type="binding site" evidence="1">
    <location>
        <position position="390"/>
    </location>
    <ligand>
        <name>(2R)-2-phosphoglycerate</name>
        <dbReference type="ChEBI" id="CHEBI:58289"/>
    </ligand>
</feature>
<feature type="binding site" evidence="2 5">
    <location>
        <position position="390"/>
    </location>
    <ligand>
        <name>phosphoenolpyruvate</name>
        <dbReference type="ChEBI" id="CHEBI:58702"/>
    </ligand>
</feature>
<feature type="strand" evidence="6">
    <location>
        <begin position="8"/>
        <end position="18"/>
    </location>
</feature>
<feature type="strand" evidence="6">
    <location>
        <begin position="24"/>
        <end position="32"/>
    </location>
</feature>
<feature type="strand" evidence="6">
    <location>
        <begin position="37"/>
        <end position="41"/>
    </location>
</feature>
<feature type="helix" evidence="6">
    <location>
        <begin position="64"/>
        <end position="66"/>
    </location>
</feature>
<feature type="helix" evidence="6">
    <location>
        <begin position="70"/>
        <end position="83"/>
    </location>
</feature>
<feature type="helix" evidence="6">
    <location>
        <begin position="91"/>
        <end position="102"/>
    </location>
</feature>
<feature type="turn" evidence="6">
    <location>
        <begin position="108"/>
        <end position="110"/>
    </location>
</feature>
<feature type="helix" evidence="6">
    <location>
        <begin position="112"/>
        <end position="130"/>
    </location>
</feature>
<feature type="helix" evidence="6">
    <location>
        <begin position="134"/>
        <end position="139"/>
    </location>
</feature>
<feature type="helix" evidence="6">
    <location>
        <begin position="140"/>
        <end position="142"/>
    </location>
</feature>
<feature type="strand" evidence="6">
    <location>
        <begin position="148"/>
        <end position="155"/>
    </location>
</feature>
<feature type="helix" evidence="6">
    <location>
        <begin position="157"/>
        <end position="159"/>
    </location>
</feature>
<feature type="strand" evidence="6">
    <location>
        <begin position="161"/>
        <end position="163"/>
    </location>
</feature>
<feature type="strand" evidence="6">
    <location>
        <begin position="166"/>
        <end position="172"/>
    </location>
</feature>
<feature type="helix" evidence="6">
    <location>
        <begin position="179"/>
        <end position="199"/>
    </location>
</feature>
<feature type="helix" evidence="6">
    <location>
        <begin position="219"/>
        <end position="232"/>
    </location>
</feature>
<feature type="turn" evidence="6">
    <location>
        <begin position="238"/>
        <end position="240"/>
    </location>
</feature>
<feature type="strand" evidence="6">
    <location>
        <begin position="241"/>
        <end position="246"/>
    </location>
</feature>
<feature type="helix" evidence="6">
    <location>
        <begin position="249"/>
        <end position="252"/>
    </location>
</feature>
<feature type="strand" evidence="6">
    <location>
        <begin position="253"/>
        <end position="256"/>
    </location>
</feature>
<feature type="strand" evidence="6">
    <location>
        <begin position="258"/>
        <end position="260"/>
    </location>
</feature>
<feature type="strand" evidence="6">
    <location>
        <begin position="263"/>
        <end position="265"/>
    </location>
</feature>
<feature type="helix" evidence="6">
    <location>
        <begin position="267"/>
        <end position="280"/>
    </location>
</feature>
<feature type="strand" evidence="6">
    <location>
        <begin position="283"/>
        <end position="288"/>
    </location>
</feature>
<feature type="helix" evidence="6">
    <location>
        <begin position="295"/>
        <end position="305"/>
    </location>
</feature>
<feature type="turn" evidence="6">
    <location>
        <begin position="306"/>
        <end position="308"/>
    </location>
</feature>
<feature type="strand" evidence="6">
    <location>
        <begin position="309"/>
        <end position="314"/>
    </location>
</feature>
<feature type="turn" evidence="6">
    <location>
        <begin position="315"/>
        <end position="319"/>
    </location>
</feature>
<feature type="helix" evidence="6">
    <location>
        <begin position="321"/>
        <end position="329"/>
    </location>
</feature>
<feature type="strand" evidence="6">
    <location>
        <begin position="334"/>
        <end position="338"/>
    </location>
</feature>
<feature type="helix" evidence="6">
    <location>
        <begin position="340"/>
        <end position="343"/>
    </location>
</feature>
<feature type="helix" evidence="6">
    <location>
        <begin position="346"/>
        <end position="358"/>
    </location>
</feature>
<feature type="strand" evidence="6">
    <location>
        <begin position="362"/>
        <end position="366"/>
    </location>
</feature>
<feature type="helix" evidence="6">
    <location>
        <begin position="376"/>
        <end position="383"/>
    </location>
</feature>
<feature type="strand" evidence="6">
    <location>
        <begin position="387"/>
        <end position="392"/>
    </location>
</feature>
<feature type="strand" evidence="6">
    <location>
        <begin position="394"/>
        <end position="396"/>
    </location>
</feature>
<feature type="helix" evidence="6">
    <location>
        <begin position="397"/>
        <end position="413"/>
    </location>
</feature>
<feature type="helix" evidence="6">
    <location>
        <begin position="414"/>
        <end position="416"/>
    </location>
</feature>
<feature type="helix" evidence="6">
    <location>
        <begin position="420"/>
        <end position="422"/>
    </location>
</feature>
<protein>
    <recommendedName>
        <fullName evidence="1">Enolase</fullName>
        <ecNumber evidence="1 2">4.2.1.11</ecNumber>
    </recommendedName>
    <alternativeName>
        <fullName evidence="1">2-phospho-D-glycerate hydro-lyase</fullName>
    </alternativeName>
    <alternativeName>
        <fullName evidence="1">2-phosphoglycerate dehydratase</fullName>
    </alternativeName>
</protein>